<keyword id="KW-0028">Amino-acid biosynthesis</keyword>
<keyword id="KW-0963">Cytoplasm</keyword>
<keyword id="KW-0368">Histidine biosynthesis</keyword>
<keyword id="KW-0413">Isomerase</keyword>
<gene>
    <name evidence="1" type="primary">hisA</name>
    <name type="ordered locus">ECIAI1_2094</name>
</gene>
<name>HIS4_ECO8A</name>
<feature type="chain" id="PRO_1000135111" description="1-(5-phosphoribosyl)-5-[(5-phosphoribosylamino)methylideneamino] imidazole-4-carboxamide isomerase">
    <location>
        <begin position="1"/>
        <end position="245"/>
    </location>
</feature>
<feature type="active site" description="Proton acceptor" evidence="1">
    <location>
        <position position="7"/>
    </location>
</feature>
<feature type="active site" description="Proton donor" evidence="1">
    <location>
        <position position="129"/>
    </location>
</feature>
<sequence>MIIPALDLIDGTVVRLHQGDYGKQRDYGNDPLPRLQDYAAQGAEVLHLVDLTGAKDPAKRQIPLIKTLVAGVNVPVQVGGGVRSEEDVAALLEAGVARVVVGSTAVKSQDMVKGWFERFGADALVLALDVRIDEQGNKQVAVSGWQENSGVSLEQLVETYLPVGLKHVLCTDISRDGTLAGSNVSLYEEVCARYPQVAFQSSGGIGDIDDVAALRGTGVRGVIVGRALLEGKFTVKEAIACWQNA</sequence>
<organism>
    <name type="scientific">Escherichia coli O8 (strain IAI1)</name>
    <dbReference type="NCBI Taxonomy" id="585034"/>
    <lineage>
        <taxon>Bacteria</taxon>
        <taxon>Pseudomonadati</taxon>
        <taxon>Pseudomonadota</taxon>
        <taxon>Gammaproteobacteria</taxon>
        <taxon>Enterobacterales</taxon>
        <taxon>Enterobacteriaceae</taxon>
        <taxon>Escherichia</taxon>
    </lineage>
</organism>
<dbReference type="EC" id="5.3.1.16" evidence="1"/>
<dbReference type="EMBL" id="CU928160">
    <property type="protein sequence ID" value="CAQ98942.1"/>
    <property type="molecule type" value="Genomic_DNA"/>
</dbReference>
<dbReference type="RefSeq" id="WP_000586462.1">
    <property type="nucleotide sequence ID" value="NC_011741.1"/>
</dbReference>
<dbReference type="SMR" id="B7M403"/>
<dbReference type="KEGG" id="ecr:ECIAI1_2094"/>
<dbReference type="HOGENOM" id="CLU_048577_1_2_6"/>
<dbReference type="UniPathway" id="UPA00031">
    <property type="reaction ID" value="UER00009"/>
</dbReference>
<dbReference type="GO" id="GO:0005737">
    <property type="term" value="C:cytoplasm"/>
    <property type="evidence" value="ECO:0007669"/>
    <property type="project" value="UniProtKB-SubCell"/>
</dbReference>
<dbReference type="GO" id="GO:0003949">
    <property type="term" value="F:1-(5-phosphoribosyl)-5-[(5-phosphoribosylamino)methylideneamino]imidazole-4-carboxamide isomerase activity"/>
    <property type="evidence" value="ECO:0007669"/>
    <property type="project" value="UniProtKB-UniRule"/>
</dbReference>
<dbReference type="GO" id="GO:0000105">
    <property type="term" value="P:L-histidine biosynthetic process"/>
    <property type="evidence" value="ECO:0007669"/>
    <property type="project" value="UniProtKB-UniRule"/>
</dbReference>
<dbReference type="GO" id="GO:0000162">
    <property type="term" value="P:L-tryptophan biosynthetic process"/>
    <property type="evidence" value="ECO:0007669"/>
    <property type="project" value="TreeGrafter"/>
</dbReference>
<dbReference type="CDD" id="cd04732">
    <property type="entry name" value="HisA"/>
    <property type="match status" value="1"/>
</dbReference>
<dbReference type="FunFam" id="3.20.20.70:FF:000009">
    <property type="entry name" value="1-(5-phosphoribosyl)-5-[(5-phosphoribosylamino)methylideneamino] imidazole-4-carboxamide isomerase"/>
    <property type="match status" value="1"/>
</dbReference>
<dbReference type="Gene3D" id="3.20.20.70">
    <property type="entry name" value="Aldolase class I"/>
    <property type="match status" value="1"/>
</dbReference>
<dbReference type="HAMAP" id="MF_01014">
    <property type="entry name" value="HisA"/>
    <property type="match status" value="1"/>
</dbReference>
<dbReference type="InterPro" id="IPR013785">
    <property type="entry name" value="Aldolase_TIM"/>
</dbReference>
<dbReference type="InterPro" id="IPR006062">
    <property type="entry name" value="His_biosynth"/>
</dbReference>
<dbReference type="InterPro" id="IPR006063">
    <property type="entry name" value="HisA_bact_arch"/>
</dbReference>
<dbReference type="InterPro" id="IPR044524">
    <property type="entry name" value="Isoase_HisA-like"/>
</dbReference>
<dbReference type="InterPro" id="IPR023016">
    <property type="entry name" value="Isoase_HisA-like_bact"/>
</dbReference>
<dbReference type="InterPro" id="IPR011060">
    <property type="entry name" value="RibuloseP-bd_barrel"/>
</dbReference>
<dbReference type="NCBIfam" id="TIGR00007">
    <property type="entry name" value="1-(5-phosphoribosyl)-5-[(5-phosphoribosylamino)methylideneamino]imidazole-4-carboxamide isomerase"/>
    <property type="match status" value="1"/>
</dbReference>
<dbReference type="PANTHER" id="PTHR43090">
    <property type="entry name" value="1-(5-PHOSPHORIBOSYL)-5-[(5-PHOSPHORIBOSYLAMINO)METHYLIDENEAMINO] IMIDAZOLE-4-CARBOXAMIDE ISOMERASE"/>
    <property type="match status" value="1"/>
</dbReference>
<dbReference type="PANTHER" id="PTHR43090:SF2">
    <property type="entry name" value="1-(5-PHOSPHORIBOSYL)-5-[(5-PHOSPHORIBOSYLAMINO)METHYLIDENEAMINO] IMIDAZOLE-4-CARBOXAMIDE ISOMERASE"/>
    <property type="match status" value="1"/>
</dbReference>
<dbReference type="Pfam" id="PF00977">
    <property type="entry name" value="His_biosynth"/>
    <property type="match status" value="1"/>
</dbReference>
<dbReference type="SUPFAM" id="SSF51366">
    <property type="entry name" value="Ribulose-phoshate binding barrel"/>
    <property type="match status" value="1"/>
</dbReference>
<comment type="catalytic activity">
    <reaction evidence="1">
        <text>1-(5-phospho-beta-D-ribosyl)-5-[(5-phospho-beta-D-ribosylamino)methylideneamino]imidazole-4-carboxamide = 5-[(5-phospho-1-deoxy-D-ribulos-1-ylimino)methylamino]-1-(5-phospho-beta-D-ribosyl)imidazole-4-carboxamide</text>
        <dbReference type="Rhea" id="RHEA:15469"/>
        <dbReference type="ChEBI" id="CHEBI:58435"/>
        <dbReference type="ChEBI" id="CHEBI:58525"/>
        <dbReference type="EC" id="5.3.1.16"/>
    </reaction>
</comment>
<comment type="pathway">
    <text evidence="1">Amino-acid biosynthesis; L-histidine biosynthesis; L-histidine from 5-phospho-alpha-D-ribose 1-diphosphate: step 4/9.</text>
</comment>
<comment type="subcellular location">
    <subcellularLocation>
        <location evidence="1">Cytoplasm</location>
    </subcellularLocation>
</comment>
<comment type="similarity">
    <text evidence="1">Belongs to the HisA/HisF family.</text>
</comment>
<proteinExistence type="inferred from homology"/>
<accession>B7M403</accession>
<protein>
    <recommendedName>
        <fullName evidence="1">1-(5-phosphoribosyl)-5-[(5-phosphoribosylamino)methylideneamino] imidazole-4-carboxamide isomerase</fullName>
        <ecNumber evidence="1">5.3.1.16</ecNumber>
    </recommendedName>
    <alternativeName>
        <fullName evidence="1">Phosphoribosylformimino-5-aminoimidazole carboxamide ribotide isomerase</fullName>
    </alternativeName>
</protein>
<reference key="1">
    <citation type="journal article" date="2009" name="PLoS Genet.">
        <title>Organised genome dynamics in the Escherichia coli species results in highly diverse adaptive paths.</title>
        <authorList>
            <person name="Touchon M."/>
            <person name="Hoede C."/>
            <person name="Tenaillon O."/>
            <person name="Barbe V."/>
            <person name="Baeriswyl S."/>
            <person name="Bidet P."/>
            <person name="Bingen E."/>
            <person name="Bonacorsi S."/>
            <person name="Bouchier C."/>
            <person name="Bouvet O."/>
            <person name="Calteau A."/>
            <person name="Chiapello H."/>
            <person name="Clermont O."/>
            <person name="Cruveiller S."/>
            <person name="Danchin A."/>
            <person name="Diard M."/>
            <person name="Dossat C."/>
            <person name="Karoui M.E."/>
            <person name="Frapy E."/>
            <person name="Garry L."/>
            <person name="Ghigo J.M."/>
            <person name="Gilles A.M."/>
            <person name="Johnson J."/>
            <person name="Le Bouguenec C."/>
            <person name="Lescat M."/>
            <person name="Mangenot S."/>
            <person name="Martinez-Jehanne V."/>
            <person name="Matic I."/>
            <person name="Nassif X."/>
            <person name="Oztas S."/>
            <person name="Petit M.A."/>
            <person name="Pichon C."/>
            <person name="Rouy Z."/>
            <person name="Ruf C.S."/>
            <person name="Schneider D."/>
            <person name="Tourret J."/>
            <person name="Vacherie B."/>
            <person name="Vallenet D."/>
            <person name="Medigue C."/>
            <person name="Rocha E.P.C."/>
            <person name="Denamur E."/>
        </authorList>
    </citation>
    <scope>NUCLEOTIDE SEQUENCE [LARGE SCALE GENOMIC DNA]</scope>
    <source>
        <strain>IAI1</strain>
    </source>
</reference>
<evidence type="ECO:0000255" key="1">
    <source>
        <dbReference type="HAMAP-Rule" id="MF_01014"/>
    </source>
</evidence>